<organism>
    <name type="scientific">Methanocaldococcus jannaschii (strain ATCC 43067 / DSM 2661 / JAL-1 / JCM 10045 / NBRC 100440)</name>
    <name type="common">Methanococcus jannaschii</name>
    <dbReference type="NCBI Taxonomy" id="243232"/>
    <lineage>
        <taxon>Archaea</taxon>
        <taxon>Methanobacteriati</taxon>
        <taxon>Methanobacteriota</taxon>
        <taxon>Methanomada group</taxon>
        <taxon>Methanococci</taxon>
        <taxon>Methanococcales</taxon>
        <taxon>Methanocaldococcaceae</taxon>
        <taxon>Methanocaldococcus</taxon>
    </lineage>
</organism>
<gene>
    <name type="ordered locus">MJ0669</name>
</gene>
<comment type="catalytic activity">
    <reaction>
        <text>ATP + H2O = ADP + phosphate + H(+)</text>
        <dbReference type="Rhea" id="RHEA:13065"/>
        <dbReference type="ChEBI" id="CHEBI:15377"/>
        <dbReference type="ChEBI" id="CHEBI:15378"/>
        <dbReference type="ChEBI" id="CHEBI:30616"/>
        <dbReference type="ChEBI" id="CHEBI:43474"/>
        <dbReference type="ChEBI" id="CHEBI:456216"/>
        <dbReference type="EC" id="3.6.4.13"/>
    </reaction>
</comment>
<comment type="subunit">
    <text>Homodimer.</text>
</comment>
<comment type="similarity">
    <text evidence="3">Belongs to the DEAD box helicase family.</text>
</comment>
<keyword id="KW-0002">3D-structure</keyword>
<keyword id="KW-0067">ATP-binding</keyword>
<keyword id="KW-0347">Helicase</keyword>
<keyword id="KW-0378">Hydrolase</keyword>
<keyword id="KW-0547">Nucleotide-binding</keyword>
<keyword id="KW-1185">Reference proteome</keyword>
<keyword id="KW-0694">RNA-binding</keyword>
<name>H669_METJA</name>
<accession>Q58083</accession>
<proteinExistence type="evidence at protein level"/>
<dbReference type="EC" id="3.6.4.13"/>
<dbReference type="EMBL" id="L77117">
    <property type="protein sequence ID" value="AAB98663.1"/>
    <property type="molecule type" value="Genomic_DNA"/>
</dbReference>
<dbReference type="PIR" id="E64383">
    <property type="entry name" value="E64383"/>
</dbReference>
<dbReference type="PDB" id="1HV8">
    <property type="method" value="X-ray"/>
    <property type="resolution" value="3.00 A"/>
    <property type="chains" value="A/B=1-367"/>
</dbReference>
<dbReference type="PDBsum" id="1HV8"/>
<dbReference type="SMR" id="Q58083"/>
<dbReference type="FunCoup" id="Q58083">
    <property type="interactions" value="70"/>
</dbReference>
<dbReference type="STRING" id="243232.MJ_0669"/>
<dbReference type="REBASE" id="203805">
    <property type="entry name" value="Ppe892ORF686P"/>
</dbReference>
<dbReference type="REBASE" id="205577">
    <property type="entry name" value="Ppe194ORF513P"/>
</dbReference>
<dbReference type="PaxDb" id="243232-MJ_0669"/>
<dbReference type="EnsemblBacteria" id="AAB98663">
    <property type="protein sequence ID" value="AAB98663"/>
    <property type="gene ID" value="MJ_0669"/>
</dbReference>
<dbReference type="KEGG" id="mja:MJ_0669"/>
<dbReference type="eggNOG" id="arCOG00558">
    <property type="taxonomic scope" value="Archaea"/>
</dbReference>
<dbReference type="HOGENOM" id="CLU_003041_1_3_2"/>
<dbReference type="InParanoid" id="Q58083"/>
<dbReference type="PhylomeDB" id="Q58083"/>
<dbReference type="EvolutionaryTrace" id="Q58083"/>
<dbReference type="Proteomes" id="UP000000805">
    <property type="component" value="Chromosome"/>
</dbReference>
<dbReference type="GO" id="GO:0005524">
    <property type="term" value="F:ATP binding"/>
    <property type="evidence" value="ECO:0007669"/>
    <property type="project" value="UniProtKB-KW"/>
</dbReference>
<dbReference type="GO" id="GO:0016887">
    <property type="term" value="F:ATP hydrolysis activity"/>
    <property type="evidence" value="ECO:0007669"/>
    <property type="project" value="RHEA"/>
</dbReference>
<dbReference type="GO" id="GO:0140097">
    <property type="term" value="F:catalytic activity, acting on DNA"/>
    <property type="evidence" value="ECO:0007669"/>
    <property type="project" value="UniProtKB-ARBA"/>
</dbReference>
<dbReference type="GO" id="GO:0003723">
    <property type="term" value="F:RNA binding"/>
    <property type="evidence" value="ECO:0000318"/>
    <property type="project" value="GO_Central"/>
</dbReference>
<dbReference type="GO" id="GO:0003724">
    <property type="term" value="F:RNA helicase activity"/>
    <property type="evidence" value="ECO:0000318"/>
    <property type="project" value="GO_Central"/>
</dbReference>
<dbReference type="CDD" id="cd00268">
    <property type="entry name" value="DEADc"/>
    <property type="match status" value="1"/>
</dbReference>
<dbReference type="CDD" id="cd18787">
    <property type="entry name" value="SF2_C_DEAD"/>
    <property type="match status" value="1"/>
</dbReference>
<dbReference type="Gene3D" id="3.40.50.300">
    <property type="entry name" value="P-loop containing nucleotide triphosphate hydrolases"/>
    <property type="match status" value="2"/>
</dbReference>
<dbReference type="InterPro" id="IPR011545">
    <property type="entry name" value="DEAD/DEAH_box_helicase_dom"/>
</dbReference>
<dbReference type="InterPro" id="IPR050547">
    <property type="entry name" value="DEAD_box_RNA_helicases"/>
</dbReference>
<dbReference type="InterPro" id="IPR014001">
    <property type="entry name" value="Helicase_ATP-bd"/>
</dbReference>
<dbReference type="InterPro" id="IPR001650">
    <property type="entry name" value="Helicase_C-like"/>
</dbReference>
<dbReference type="InterPro" id="IPR027417">
    <property type="entry name" value="P-loop_NTPase"/>
</dbReference>
<dbReference type="InterPro" id="IPR000629">
    <property type="entry name" value="RNA-helicase_DEAD-box_CS"/>
</dbReference>
<dbReference type="InterPro" id="IPR014014">
    <property type="entry name" value="RNA_helicase_DEAD_Q_motif"/>
</dbReference>
<dbReference type="PANTHER" id="PTHR47963:SF8">
    <property type="entry name" value="ATP-DEPENDENT RNA HELICASE DEAD"/>
    <property type="match status" value="1"/>
</dbReference>
<dbReference type="PANTHER" id="PTHR47963">
    <property type="entry name" value="DEAD-BOX ATP-DEPENDENT RNA HELICASE 47, MITOCHONDRIAL"/>
    <property type="match status" value="1"/>
</dbReference>
<dbReference type="Pfam" id="PF00270">
    <property type="entry name" value="DEAD"/>
    <property type="match status" value="1"/>
</dbReference>
<dbReference type="Pfam" id="PF00271">
    <property type="entry name" value="Helicase_C"/>
    <property type="match status" value="1"/>
</dbReference>
<dbReference type="SMART" id="SM00487">
    <property type="entry name" value="DEXDc"/>
    <property type="match status" value="1"/>
</dbReference>
<dbReference type="SMART" id="SM00490">
    <property type="entry name" value="HELICc"/>
    <property type="match status" value="1"/>
</dbReference>
<dbReference type="SUPFAM" id="SSF52540">
    <property type="entry name" value="P-loop containing nucleoside triphosphate hydrolases"/>
    <property type="match status" value="1"/>
</dbReference>
<dbReference type="PROSITE" id="PS00039">
    <property type="entry name" value="DEAD_ATP_HELICASE"/>
    <property type="match status" value="1"/>
</dbReference>
<dbReference type="PROSITE" id="PS51192">
    <property type="entry name" value="HELICASE_ATP_BIND_1"/>
    <property type="match status" value="1"/>
</dbReference>
<dbReference type="PROSITE" id="PS51194">
    <property type="entry name" value="HELICASE_CTER"/>
    <property type="match status" value="1"/>
</dbReference>
<dbReference type="PROSITE" id="PS51195">
    <property type="entry name" value="Q_MOTIF"/>
    <property type="match status" value="1"/>
</dbReference>
<feature type="chain" id="PRO_0000055116" description="Probable ATP-dependent RNA helicase MJ0669">
    <location>
        <begin position="1"/>
        <end position="367"/>
    </location>
</feature>
<feature type="domain" description="Helicase ATP-binding" evidence="1">
    <location>
        <begin position="38"/>
        <end position="206"/>
    </location>
</feature>
<feature type="domain" description="Helicase C-terminal" evidence="2">
    <location>
        <begin position="213"/>
        <end position="367"/>
    </location>
</feature>
<feature type="short sequence motif" description="Q motif">
    <location>
        <begin position="6"/>
        <end position="34"/>
    </location>
</feature>
<feature type="short sequence motif" description="DEAD box">
    <location>
        <begin position="154"/>
        <end position="157"/>
    </location>
</feature>
<feature type="binding site" evidence="1">
    <location>
        <begin position="51"/>
        <end position="58"/>
    </location>
    <ligand>
        <name>ATP</name>
        <dbReference type="ChEBI" id="CHEBI:30616"/>
    </ligand>
</feature>
<feature type="helix" evidence="4">
    <location>
        <begin position="8"/>
        <end position="10"/>
    </location>
</feature>
<feature type="helix" evidence="4">
    <location>
        <begin position="15"/>
        <end position="24"/>
    </location>
</feature>
<feature type="helix" evidence="4">
    <location>
        <begin position="31"/>
        <end position="42"/>
    </location>
</feature>
<feature type="strand" evidence="4">
    <location>
        <begin position="45"/>
        <end position="50"/>
    </location>
</feature>
<feature type="strand" evidence="4">
    <location>
        <begin position="53"/>
        <end position="56"/>
    </location>
</feature>
<feature type="helix" evidence="4">
    <location>
        <begin position="57"/>
        <end position="68"/>
    </location>
</feature>
<feature type="strand" evidence="4">
    <location>
        <begin position="71"/>
        <end position="74"/>
    </location>
</feature>
<feature type="strand" evidence="4">
    <location>
        <begin position="77"/>
        <end position="80"/>
    </location>
</feature>
<feature type="helix" evidence="4">
    <location>
        <begin position="84"/>
        <end position="98"/>
    </location>
</feature>
<feature type="strand" evidence="4">
    <location>
        <begin position="105"/>
        <end position="108"/>
    </location>
</feature>
<feature type="helix" evidence="4">
    <location>
        <begin position="114"/>
        <end position="122"/>
    </location>
</feature>
<feature type="strand" evidence="4">
    <location>
        <begin position="125"/>
        <end position="129"/>
    </location>
</feature>
<feature type="helix" evidence="4">
    <location>
        <begin position="131"/>
        <end position="139"/>
    </location>
</feature>
<feature type="strand" evidence="4">
    <location>
        <begin position="150"/>
        <end position="155"/>
    </location>
</feature>
<feature type="helix" evidence="4">
    <location>
        <begin position="156"/>
        <end position="160"/>
    </location>
</feature>
<feature type="turn" evidence="4">
    <location>
        <begin position="161"/>
        <end position="164"/>
    </location>
</feature>
<feature type="helix" evidence="4">
    <location>
        <begin position="165"/>
        <end position="173"/>
    </location>
</feature>
<feature type="strand" evidence="4">
    <location>
        <begin position="180"/>
        <end position="184"/>
    </location>
</feature>
<feature type="helix" evidence="4">
    <location>
        <begin position="190"/>
        <end position="199"/>
    </location>
</feature>
<feature type="strand" evidence="4">
    <location>
        <begin position="202"/>
        <end position="207"/>
    </location>
</feature>
<feature type="strand" evidence="4">
    <location>
        <begin position="210"/>
        <end position="220"/>
    </location>
</feature>
<feature type="helix" evidence="4">
    <location>
        <begin position="223"/>
        <end position="225"/>
    </location>
</feature>
<feature type="helix" evidence="4">
    <location>
        <begin position="226"/>
        <end position="234"/>
    </location>
</feature>
<feature type="strand" evidence="4">
    <location>
        <begin position="241"/>
        <end position="244"/>
    </location>
</feature>
<feature type="helix" evidence="4">
    <location>
        <begin position="248"/>
        <end position="260"/>
    </location>
</feature>
<feature type="strand" evidence="4">
    <location>
        <begin position="265"/>
        <end position="268"/>
    </location>
</feature>
<feature type="strand" evidence="4">
    <location>
        <begin position="270"/>
        <end position="272"/>
    </location>
</feature>
<feature type="helix" evidence="4">
    <location>
        <begin position="274"/>
        <end position="285"/>
    </location>
</feature>
<feature type="strand" evidence="4">
    <location>
        <begin position="288"/>
        <end position="294"/>
    </location>
</feature>
<feature type="helix" evidence="4">
    <location>
        <begin position="298"/>
        <end position="301"/>
    </location>
</feature>
<feature type="strand" evidence="4">
    <location>
        <begin position="308"/>
        <end position="314"/>
    </location>
</feature>
<feature type="helix" evidence="4">
    <location>
        <begin position="319"/>
        <end position="325"/>
    </location>
</feature>
<feature type="strand" evidence="4">
    <location>
        <begin position="332"/>
        <end position="334"/>
    </location>
</feature>
<feature type="strand" evidence="4">
    <location>
        <begin position="337"/>
        <end position="342"/>
    </location>
</feature>
<feature type="helix" evidence="4">
    <location>
        <begin position="347"/>
        <end position="357"/>
    </location>
</feature>
<reference key="1">
    <citation type="journal article" date="1996" name="Science">
        <title>Complete genome sequence of the methanogenic archaeon, Methanococcus jannaschii.</title>
        <authorList>
            <person name="Bult C.J."/>
            <person name="White O."/>
            <person name="Olsen G.J."/>
            <person name="Zhou L."/>
            <person name="Fleischmann R.D."/>
            <person name="Sutton G.G."/>
            <person name="Blake J.A."/>
            <person name="FitzGerald L.M."/>
            <person name="Clayton R.A."/>
            <person name="Gocayne J.D."/>
            <person name="Kerlavage A.R."/>
            <person name="Dougherty B.A."/>
            <person name="Tomb J.-F."/>
            <person name="Adams M.D."/>
            <person name="Reich C.I."/>
            <person name="Overbeek R."/>
            <person name="Kirkness E.F."/>
            <person name="Weinstock K.G."/>
            <person name="Merrick J.M."/>
            <person name="Glodek A."/>
            <person name="Scott J.L."/>
            <person name="Geoghagen N.S.M."/>
            <person name="Weidman J.F."/>
            <person name="Fuhrmann J.L."/>
            <person name="Nguyen D."/>
            <person name="Utterback T.R."/>
            <person name="Kelley J.M."/>
            <person name="Peterson J.D."/>
            <person name="Sadow P.W."/>
            <person name="Hanna M.C."/>
            <person name="Cotton M.D."/>
            <person name="Roberts K.M."/>
            <person name="Hurst M.A."/>
            <person name="Kaine B.P."/>
            <person name="Borodovsky M."/>
            <person name="Klenk H.-P."/>
            <person name="Fraser C.M."/>
            <person name="Smith H.O."/>
            <person name="Woese C.R."/>
            <person name="Venter J.C."/>
        </authorList>
    </citation>
    <scope>NUCLEOTIDE SEQUENCE [LARGE SCALE GENOMIC DNA]</scope>
    <source>
        <strain>ATCC 43067 / DSM 2661 / JAL-1 / JCM 10045 / NBRC 100440</strain>
    </source>
</reference>
<reference key="2">
    <citation type="journal article" date="2001" name="Proc. Natl. Acad. Sci. U.S.A.">
        <title>Crystal structure of a DEAD box protein from the hyperthermophile Methanococcus jannaschii.</title>
        <authorList>
            <person name="Story R.M."/>
            <person name="Li H."/>
            <person name="Abelson J.N."/>
        </authorList>
    </citation>
    <scope>X-RAY CRYSTALLOGRAPHY (3.0 ANGSTROMS)</scope>
</reference>
<evidence type="ECO:0000255" key="1">
    <source>
        <dbReference type="PROSITE-ProRule" id="PRU00541"/>
    </source>
</evidence>
<evidence type="ECO:0000255" key="2">
    <source>
        <dbReference type="PROSITE-ProRule" id="PRU00542"/>
    </source>
</evidence>
<evidence type="ECO:0000305" key="3"/>
<evidence type="ECO:0007829" key="4">
    <source>
        <dbReference type="PDB" id="1HV8"/>
    </source>
</evidence>
<protein>
    <recommendedName>
        <fullName>Probable ATP-dependent RNA helicase MJ0669</fullName>
        <ecNumber>3.6.4.13</ecNumber>
    </recommendedName>
</protein>
<sequence>MEVEYMNFNELNLSDNILNAIRNKGFEKPTDIQMKVIPLFLNDEYNIVAQARTGSGKTASFAIPLIELVNENNGIEAIILTPTRELAIQVADEIESLKGNKNLKIAKIYGGKAIYPQIKALKNANIVVGTPGRILDHINRGTLNLKNVKYFILDEADEMLNMGFIKDVEKILNACNKDKRILLFSATMPREILNLAKKYMGDYSFIKAKINANIEQSYVEVNENERFEALCRLLKNKEFYGLVFCKTKRDTKELASMLRDIGFKAGAIHGDLSQSQREKVIRLFKQKKIRILIATDVMSRGIDVNDLNCVINYHLPQNPESYMHRIGRTGRAGKKGKAISIINRREYKKLRYIERAMKLKIKKLKFG</sequence>